<reference key="1">
    <citation type="journal article" date="2002" name="Lancet">
        <title>Genome and virulence determinants of high virulence community-acquired MRSA.</title>
        <authorList>
            <person name="Baba T."/>
            <person name="Takeuchi F."/>
            <person name="Kuroda M."/>
            <person name="Yuzawa H."/>
            <person name="Aoki K."/>
            <person name="Oguchi A."/>
            <person name="Nagai Y."/>
            <person name="Iwama N."/>
            <person name="Asano K."/>
            <person name="Naimi T."/>
            <person name="Kuroda H."/>
            <person name="Cui L."/>
            <person name="Yamamoto K."/>
            <person name="Hiramatsu K."/>
        </authorList>
    </citation>
    <scope>NUCLEOTIDE SEQUENCE [LARGE SCALE GENOMIC DNA]</scope>
    <source>
        <strain>MW2</strain>
    </source>
</reference>
<organism>
    <name type="scientific">Staphylococcus aureus (strain MW2)</name>
    <dbReference type="NCBI Taxonomy" id="196620"/>
    <lineage>
        <taxon>Bacteria</taxon>
        <taxon>Bacillati</taxon>
        <taxon>Bacillota</taxon>
        <taxon>Bacilli</taxon>
        <taxon>Bacillales</taxon>
        <taxon>Staphylococcaceae</taxon>
        <taxon>Staphylococcus</taxon>
    </lineage>
</organism>
<sequence>MAKKFNYKLPSMVALTLVGSAVTAHQVQAAETTQDQTTNKNVLDSNKVKATTEQAKAEVKNPTQNISGTQVYQDPAIVQPKTANNKTGNAQVSQKVDTAQVNGDTRANQSATTNNTQPVAKSTSTTAPKTNTNVTNAGYSLVDDEDDNSENQINPELIKSAAKPAALETQYKAAAPKAATTSAPKAKTEATPKVTTFSASAQPRSVAATPKTSLPKYKPQVNSSINDYIRKNNLKAPKIEEDYTSYFPKYAYRNGVGRPEGIVVHDTANDRSTINGEISYMKNNYQNAFVHAFVDGDRIIETAPTDYLSWGVGAVGNPRFINVEIVHTHDYASFARSMNNYADYAATQLQYYGLKPDSAEYDGNGTVWTHYAVSKYLGGTDHADPHGYLRSHNYSYDQLYDLINEKYLIKMGKVAPWGTQSTTTPTTPSKPTTPSKPSTGKLTVAANNGVAQIKPTNSGLYTTVYDKTGKATNEVQKTFAVSKTATLGNQKFYLVQDYNSGNKFGWVKEGDVVYNTAKSPVNVNQSYSIKPGTKLYTVPWGTSKQVAGSVSGSGNQTFKASKQQQIDKSIYLYGSVNGKSGWVSKAYLVDTAKPTPTPTPKPSTPTTNNKLTVSSLNGVAQINAKNNGLFTTVYDKTGKPTKEVQKTFAVTKEASLGGNKFYLVKDYNSPTLIGWVKQGDVIYNNAKSPVNVMQTYTVKPGTKLYSVPWGTYKQEAGAVSGTGNQTFKATKQQQIDKSIYLFGTVNGKSGWVSKAYLAVPAAPKKAVAQPKTAVKAYTVTKPQTTQTVSKIAQVKPNNTGIRASVYEKTAKNGAKYADRTFYVTKERAHGNETYVLLNNTSHNIPLGWFNVKDLNVQNLGKEVKTTQKYTVNKSNNGLSMVPWGTKNQVILTGNNIAQGTFNATKQVSVGKDVYLYGTINNRTGWVNAKDLTAPTAVKPTTSAAKDYNYTYVIKNGNGYYYVTPNSDTAKYSLKAFNEQPFAVVKEQVINGQTWYYGKLSNGKLAWIKSTDLAKELIKYNQTGMTLNQVAQIQAGLQYKPQVQRVPGKWTDANFNDVKHAMDTKRLAQDPALKYQFLRLDQPQNISIDKINQFLKGKGVLENQGAAFNKAAQMYGINEVYLISHALLETGNGTSQLAKGADVVNNKVVTNSNTKYHNVFGIAAYDNDPLREGIKYAKQAGWDTVSKAIVGGAKFIGNSYVKAGQNTLYKMRWNPAHPGTHQYATDIDWANINAKIIKGYYDKIGEVGKYFDIPQYK</sequence>
<keyword id="KW-0961">Cell wall biogenesis/degradation</keyword>
<keyword id="KW-0378">Hydrolase</keyword>
<keyword id="KW-0511">Multifunctional enzyme</keyword>
<keyword id="KW-0677">Repeat</keyword>
<keyword id="KW-0964">Secreted</keyword>
<keyword id="KW-0732">Signal</keyword>
<dbReference type="EC" id="3.5.1.28"/>
<dbReference type="EC" id="3.2.1.96"/>
<dbReference type="EMBL" id="BA000033">
    <property type="protein sequence ID" value="BAB94801.1"/>
    <property type="molecule type" value="Genomic_DNA"/>
</dbReference>
<dbReference type="RefSeq" id="WP_001074542.1">
    <property type="nucleotide sequence ID" value="NC_003923.1"/>
</dbReference>
<dbReference type="SMR" id="Q8NX96"/>
<dbReference type="CAZy" id="GH73">
    <property type="family name" value="Glycoside Hydrolase Family 73"/>
</dbReference>
<dbReference type="KEGG" id="sam:MW0936"/>
<dbReference type="HOGENOM" id="CLU_005906_0_0_9"/>
<dbReference type="GO" id="GO:0005576">
    <property type="term" value="C:extracellular region"/>
    <property type="evidence" value="ECO:0007669"/>
    <property type="project" value="UniProtKB-SubCell"/>
</dbReference>
<dbReference type="GO" id="GO:0004040">
    <property type="term" value="F:amidase activity"/>
    <property type="evidence" value="ECO:0007669"/>
    <property type="project" value="InterPro"/>
</dbReference>
<dbReference type="GO" id="GO:0033925">
    <property type="term" value="F:mannosyl-glycoprotein endo-beta-N-acetylglucosaminidase activity"/>
    <property type="evidence" value="ECO:0007669"/>
    <property type="project" value="UniProtKB-EC"/>
</dbReference>
<dbReference type="GO" id="GO:0008745">
    <property type="term" value="F:N-acetylmuramoyl-L-alanine amidase activity"/>
    <property type="evidence" value="ECO:0007669"/>
    <property type="project" value="UniProtKB-EC"/>
</dbReference>
<dbReference type="GO" id="GO:0071555">
    <property type="term" value="P:cell wall organization"/>
    <property type="evidence" value="ECO:0007669"/>
    <property type="project" value="UniProtKB-KW"/>
</dbReference>
<dbReference type="GO" id="GO:0009253">
    <property type="term" value="P:peptidoglycan catabolic process"/>
    <property type="evidence" value="ECO:0007669"/>
    <property type="project" value="InterPro"/>
</dbReference>
<dbReference type="CDD" id="cd06583">
    <property type="entry name" value="PGRP"/>
    <property type="match status" value="1"/>
</dbReference>
<dbReference type="Gene3D" id="1.10.530.10">
    <property type="match status" value="1"/>
</dbReference>
<dbReference type="Gene3D" id="2.30.30.170">
    <property type="match status" value="7"/>
</dbReference>
<dbReference type="Gene3D" id="3.40.80.10">
    <property type="entry name" value="Peptidoglycan recognition protein-like"/>
    <property type="match status" value="1"/>
</dbReference>
<dbReference type="InterPro" id="IPR036505">
    <property type="entry name" value="Amidase/PGRP_sf"/>
</dbReference>
<dbReference type="InterPro" id="IPR002502">
    <property type="entry name" value="Amidase_domain"/>
</dbReference>
<dbReference type="InterPro" id="IPR025987">
    <property type="entry name" value="GW_dom"/>
</dbReference>
<dbReference type="InterPro" id="IPR038200">
    <property type="entry name" value="GW_dom_sf"/>
</dbReference>
<dbReference type="InterPro" id="IPR002901">
    <property type="entry name" value="MGlyc_endo_b_GlcNAc-like_dom"/>
</dbReference>
<dbReference type="Pfam" id="PF01510">
    <property type="entry name" value="Amidase_2"/>
    <property type="match status" value="1"/>
</dbReference>
<dbReference type="Pfam" id="PF01832">
    <property type="entry name" value="Glucosaminidase"/>
    <property type="match status" value="1"/>
</dbReference>
<dbReference type="Pfam" id="PF13457">
    <property type="entry name" value="GW"/>
    <property type="match status" value="6"/>
</dbReference>
<dbReference type="SMART" id="SM00644">
    <property type="entry name" value="Ami_2"/>
    <property type="match status" value="1"/>
</dbReference>
<dbReference type="SMART" id="SM00047">
    <property type="entry name" value="LYZ2"/>
    <property type="match status" value="1"/>
</dbReference>
<dbReference type="SUPFAM" id="SSF55846">
    <property type="entry name" value="N-acetylmuramoyl-L-alanine amidase-like"/>
    <property type="match status" value="1"/>
</dbReference>
<dbReference type="SUPFAM" id="SSF82057">
    <property type="entry name" value="Prokaryotic SH3-related domain"/>
    <property type="match status" value="1"/>
</dbReference>
<dbReference type="PROSITE" id="PS51780">
    <property type="entry name" value="GW"/>
    <property type="match status" value="7"/>
</dbReference>
<comment type="function">
    <text evidence="1">Endohydrolysis of the di-N-acetylchitobiosyl unit in high-mannose glycopeptides and glycoproteins containing the -[(Man)5(GlcNAc)2]-Asn structure. One N-acetyl-D-glucosamine residue remains attached to the protein; the rest of the oligosaccharide is released intact. Cleaves the peptidoglycan connecting the daughter cells at the end of the cell division cycle, resulting in the separation of the two newly divided cells. Acts as an autolysin in penicillin-induced lysis (By similarity).</text>
</comment>
<comment type="catalytic activity">
    <reaction>
        <text>Hydrolyzes the link between N-acetylmuramoyl residues and L-amino acid residues in certain cell-wall glycopeptides.</text>
        <dbReference type="EC" id="3.5.1.28"/>
    </reaction>
</comment>
<comment type="catalytic activity">
    <reaction>
        <text>an N(4)-(oligosaccharide-(1-&gt;3)-[oligosaccharide-(1-&gt;6)]-beta-D-Man-(1-&gt;4)-beta-D-GlcNAc-(1-&gt;4)-alpha-D-GlcNAc)-L-asparaginyl-[protein] + H2O = an oligosaccharide-(1-&gt;3)-[oligosaccharide-(1-&gt;6)]-beta-D-Man-(1-&gt;4)-D-GlcNAc + N(4)-(N-acetyl-beta-D-glucosaminyl)-L-asparaginyl-[protein]</text>
        <dbReference type="Rhea" id="RHEA:73067"/>
        <dbReference type="Rhea" id="RHEA-COMP:12603"/>
        <dbReference type="Rhea" id="RHEA-COMP:18176"/>
        <dbReference type="ChEBI" id="CHEBI:15377"/>
        <dbReference type="ChEBI" id="CHEBI:132248"/>
        <dbReference type="ChEBI" id="CHEBI:192714"/>
        <dbReference type="ChEBI" id="CHEBI:192715"/>
        <dbReference type="EC" id="3.2.1.96"/>
    </reaction>
</comment>
<comment type="subunit">
    <text evidence="1">Oligomer; forms a ring structure at the cell surface which is important for efficient partitioning of daughter cells after cell division.</text>
</comment>
<comment type="subcellular location">
    <subcellularLocation>
        <location evidence="1">Secreted</location>
    </subcellularLocation>
    <text evidence="1">Secreted, and then anchored on the cell surface at the peripheral cell wall above the completed septum (septal region), for the next cell division cycle.</text>
</comment>
<comment type="domain">
    <text evidence="1">The GW domains are responsible for directing the proteins to the septal region.</text>
</comment>
<comment type="PTM">
    <text evidence="1">Undergoes proteolytic processing to generate the two extracellular lytic enzymes, probably at the septal region on the cell surface.</text>
</comment>
<comment type="similarity">
    <text evidence="5">In the N-terminal section; belongs to the N-acetylmuramoyl-L-alanine amidase 2 family.</text>
</comment>
<comment type="similarity">
    <text evidence="5">In the C-terminal section; belongs to the glycosyl hydrolase 73 family.</text>
</comment>
<accession>Q8NX96</accession>
<name>ATL_STAAW</name>
<feature type="signal peptide" evidence="2">
    <location>
        <begin position="1"/>
        <end position="29"/>
    </location>
</feature>
<feature type="chain" id="PRO_0000045478" description="Bifunctional autolysin">
    <location>
        <begin position="30"/>
        <end position="1256"/>
    </location>
</feature>
<feature type="domain" description="GW 1" evidence="3">
    <location>
        <begin position="443"/>
        <end position="517"/>
    </location>
</feature>
<feature type="domain" description="GW 2" evidence="3">
    <location>
        <begin position="519"/>
        <end position="593"/>
    </location>
</feature>
<feature type="domain" description="GW 3" evidence="3">
    <location>
        <begin position="612"/>
        <end position="686"/>
    </location>
</feature>
<feature type="domain" description="GW 4" evidence="3">
    <location>
        <begin position="688"/>
        <end position="762"/>
    </location>
</feature>
<feature type="domain" description="GW 5" evidence="3">
    <location>
        <begin position="784"/>
        <end position="859"/>
    </location>
</feature>
<feature type="domain" description="GW 6" evidence="3">
    <location>
        <begin position="861"/>
        <end position="936"/>
    </location>
</feature>
<feature type="domain" description="GW 7" evidence="3">
    <location>
        <begin position="943"/>
        <end position="1017"/>
    </location>
</feature>
<feature type="region of interest" description="Disordered" evidence="4">
    <location>
        <begin position="103"/>
        <end position="151"/>
    </location>
</feature>
<feature type="region of interest" description="Disordered" evidence="4">
    <location>
        <begin position="173"/>
        <end position="219"/>
    </location>
</feature>
<feature type="region of interest" description="N-acetylmuramoyl-L-alanine amidase">
    <location>
        <begin position="199"/>
        <end position="775"/>
    </location>
</feature>
<feature type="region of interest" description="Disordered" evidence="4">
    <location>
        <begin position="419"/>
        <end position="440"/>
    </location>
</feature>
<feature type="region of interest" description="Endo-beta-N-acetylglucosaminidase">
    <location>
        <begin position="776"/>
        <end position="1256"/>
    </location>
</feature>
<feature type="compositionally biased region" description="Polar residues" evidence="4">
    <location>
        <begin position="103"/>
        <end position="138"/>
    </location>
</feature>
<feature type="compositionally biased region" description="Low complexity" evidence="4">
    <location>
        <begin position="173"/>
        <end position="196"/>
    </location>
</feature>
<feature type="compositionally biased region" description="Low complexity" evidence="4">
    <location>
        <begin position="421"/>
        <end position="439"/>
    </location>
</feature>
<gene>
    <name type="primary">atl</name>
    <name type="synonym">nag</name>
    <name type="ordered locus">MW0936</name>
</gene>
<protein>
    <recommendedName>
        <fullName>Bifunctional autolysin</fullName>
    </recommendedName>
    <domain>
        <recommendedName>
            <fullName>N-acetylmuramoyl-L-alanine amidase</fullName>
            <ecNumber>3.5.1.28</ecNumber>
        </recommendedName>
    </domain>
    <domain>
        <recommendedName>
            <fullName>Mannosyl-glycoprotein endo-beta-N-acetylglucosaminidase</fullName>
            <ecNumber>3.2.1.96</ecNumber>
        </recommendedName>
    </domain>
</protein>
<evidence type="ECO:0000250" key="1"/>
<evidence type="ECO:0000255" key="2"/>
<evidence type="ECO:0000255" key="3">
    <source>
        <dbReference type="PROSITE-ProRule" id="PRU01116"/>
    </source>
</evidence>
<evidence type="ECO:0000256" key="4">
    <source>
        <dbReference type="SAM" id="MobiDB-lite"/>
    </source>
</evidence>
<evidence type="ECO:0000305" key="5"/>
<proteinExistence type="inferred from homology"/>